<name>ECFA1_STRPB</name>
<sequence length="279" mass="31085">MSAIIELKKVTFNYHKDQEKPTLDGVSFHVKQGEWLSIIGHNGSGKSTTIRLIDGLLEPESGSVIVDGDLLTITNVWEIRHKIGMVFQNPDNQFVGATVEDDVAFGLENKGIAHEDIKERVNHALELVGMQNFKEKEPARLSGGQKQRVAIAGAVAMKPKIIILDEATSMLDPKGRLELIKTIKNIRDDYQLTVISITHDLDEVALSDRVLVMKDGQVESTSTPEQLFARGDELLQLGLDIPFTTSVVQMLQEEGYPVDYGYLTEKELENQLCQLISKM</sequence>
<gene>
    <name evidence="1" type="primary">ecfA1</name>
    <name type="synonym">cbiO1</name>
    <name type="ordered locus">MGAS2096_Spy1877</name>
</gene>
<evidence type="ECO:0000255" key="1">
    <source>
        <dbReference type="HAMAP-Rule" id="MF_01710"/>
    </source>
</evidence>
<evidence type="ECO:0000305" key="2"/>
<comment type="function">
    <text evidence="1">ATP-binding (A) component of a common energy-coupling factor (ECF) ABC-transporter complex. Unlike classic ABC transporters this ECF transporter provides the energy necessary to transport a number of different substrates.</text>
</comment>
<comment type="subunit">
    <text evidence="1">Forms a stable energy-coupling factor (ECF) transporter complex composed of 2 membrane-embedded substrate-binding proteins (S component), 2 ATP-binding proteins (A component) and 2 transmembrane proteins (T component).</text>
</comment>
<comment type="subcellular location">
    <subcellularLocation>
        <location evidence="1">Cell membrane</location>
        <topology evidence="1">Peripheral membrane protein</topology>
    </subcellularLocation>
</comment>
<comment type="similarity">
    <text evidence="1">Belongs to the ABC transporter superfamily. Energy-coupling factor EcfA family.</text>
</comment>
<comment type="sequence caution" evidence="2">
    <conflict type="erroneous initiation">
        <sequence resource="EMBL-CDS" id="ABF36929"/>
    </conflict>
    <text>Extended N-terminus.</text>
</comment>
<keyword id="KW-0067">ATP-binding</keyword>
<keyword id="KW-1003">Cell membrane</keyword>
<keyword id="KW-0472">Membrane</keyword>
<keyword id="KW-0547">Nucleotide-binding</keyword>
<keyword id="KW-1278">Translocase</keyword>
<keyword id="KW-0813">Transport</keyword>
<proteinExistence type="inferred from homology"/>
<dbReference type="EC" id="7.-.-.-" evidence="1"/>
<dbReference type="EMBL" id="CP000261">
    <property type="protein sequence ID" value="ABF36929.1"/>
    <property type="status" value="ALT_INIT"/>
    <property type="molecule type" value="Genomic_DNA"/>
</dbReference>
<dbReference type="SMR" id="Q1J982"/>
<dbReference type="KEGG" id="spj:MGAS2096_Spy1877"/>
<dbReference type="HOGENOM" id="CLU_000604_1_22_9"/>
<dbReference type="GO" id="GO:0043190">
    <property type="term" value="C:ATP-binding cassette (ABC) transporter complex"/>
    <property type="evidence" value="ECO:0007669"/>
    <property type="project" value="TreeGrafter"/>
</dbReference>
<dbReference type="GO" id="GO:0005524">
    <property type="term" value="F:ATP binding"/>
    <property type="evidence" value="ECO:0007669"/>
    <property type="project" value="UniProtKB-KW"/>
</dbReference>
<dbReference type="GO" id="GO:0016887">
    <property type="term" value="F:ATP hydrolysis activity"/>
    <property type="evidence" value="ECO:0007669"/>
    <property type="project" value="InterPro"/>
</dbReference>
<dbReference type="GO" id="GO:0042626">
    <property type="term" value="F:ATPase-coupled transmembrane transporter activity"/>
    <property type="evidence" value="ECO:0007669"/>
    <property type="project" value="TreeGrafter"/>
</dbReference>
<dbReference type="CDD" id="cd03225">
    <property type="entry name" value="ABC_cobalt_CbiO_domain1"/>
    <property type="match status" value="1"/>
</dbReference>
<dbReference type="FunFam" id="3.40.50.300:FF:000224">
    <property type="entry name" value="Energy-coupling factor transporter ATP-binding protein EcfA"/>
    <property type="match status" value="1"/>
</dbReference>
<dbReference type="Gene3D" id="3.40.50.300">
    <property type="entry name" value="P-loop containing nucleotide triphosphate hydrolases"/>
    <property type="match status" value="1"/>
</dbReference>
<dbReference type="InterPro" id="IPR003593">
    <property type="entry name" value="AAA+_ATPase"/>
</dbReference>
<dbReference type="InterPro" id="IPR003439">
    <property type="entry name" value="ABC_transporter-like_ATP-bd"/>
</dbReference>
<dbReference type="InterPro" id="IPR017871">
    <property type="entry name" value="ABC_transporter-like_CS"/>
</dbReference>
<dbReference type="InterPro" id="IPR015856">
    <property type="entry name" value="ABC_transpr_CbiO/EcfA_su"/>
</dbReference>
<dbReference type="InterPro" id="IPR050095">
    <property type="entry name" value="ECF_ABC_transporter_ATP-bd"/>
</dbReference>
<dbReference type="InterPro" id="IPR030947">
    <property type="entry name" value="EcfA_1"/>
</dbReference>
<dbReference type="InterPro" id="IPR027417">
    <property type="entry name" value="P-loop_NTPase"/>
</dbReference>
<dbReference type="NCBIfam" id="TIGR04520">
    <property type="entry name" value="ECF_ATPase_1"/>
    <property type="match status" value="1"/>
</dbReference>
<dbReference type="NCBIfam" id="NF010156">
    <property type="entry name" value="PRK13635.1"/>
    <property type="match status" value="1"/>
</dbReference>
<dbReference type="NCBIfam" id="NF010167">
    <property type="entry name" value="PRK13648.1"/>
    <property type="match status" value="1"/>
</dbReference>
<dbReference type="PANTHER" id="PTHR43553:SF24">
    <property type="entry name" value="ENERGY-COUPLING FACTOR TRANSPORTER ATP-BINDING PROTEIN ECFA1"/>
    <property type="match status" value="1"/>
</dbReference>
<dbReference type="PANTHER" id="PTHR43553">
    <property type="entry name" value="HEAVY METAL TRANSPORTER"/>
    <property type="match status" value="1"/>
</dbReference>
<dbReference type="Pfam" id="PF00005">
    <property type="entry name" value="ABC_tran"/>
    <property type="match status" value="1"/>
</dbReference>
<dbReference type="SMART" id="SM00382">
    <property type="entry name" value="AAA"/>
    <property type="match status" value="1"/>
</dbReference>
<dbReference type="SUPFAM" id="SSF52540">
    <property type="entry name" value="P-loop containing nucleoside triphosphate hydrolases"/>
    <property type="match status" value="1"/>
</dbReference>
<dbReference type="PROSITE" id="PS00211">
    <property type="entry name" value="ABC_TRANSPORTER_1"/>
    <property type="match status" value="1"/>
</dbReference>
<dbReference type="PROSITE" id="PS50893">
    <property type="entry name" value="ABC_TRANSPORTER_2"/>
    <property type="match status" value="1"/>
</dbReference>
<dbReference type="PROSITE" id="PS51246">
    <property type="entry name" value="CBIO"/>
    <property type="match status" value="1"/>
</dbReference>
<feature type="chain" id="PRO_0000287995" description="Energy-coupling factor transporter ATP-binding protein EcfA1">
    <location>
        <begin position="1"/>
        <end position="279"/>
    </location>
</feature>
<feature type="domain" description="ABC transporter" evidence="1">
    <location>
        <begin position="5"/>
        <end position="240"/>
    </location>
</feature>
<feature type="binding site" evidence="1">
    <location>
        <begin position="40"/>
        <end position="47"/>
    </location>
    <ligand>
        <name>ATP</name>
        <dbReference type="ChEBI" id="CHEBI:30616"/>
    </ligand>
</feature>
<protein>
    <recommendedName>
        <fullName evidence="1">Energy-coupling factor transporter ATP-binding protein EcfA1</fullName>
        <shortName evidence="1">ECF transporter A component EcfA1</shortName>
        <ecNumber evidence="1">7.-.-.-</ecNumber>
    </recommendedName>
</protein>
<organism>
    <name type="scientific">Streptococcus pyogenes serotype M12 (strain MGAS2096)</name>
    <dbReference type="NCBI Taxonomy" id="370553"/>
    <lineage>
        <taxon>Bacteria</taxon>
        <taxon>Bacillati</taxon>
        <taxon>Bacillota</taxon>
        <taxon>Bacilli</taxon>
        <taxon>Lactobacillales</taxon>
        <taxon>Streptococcaceae</taxon>
        <taxon>Streptococcus</taxon>
    </lineage>
</organism>
<reference key="1">
    <citation type="journal article" date="2006" name="Proc. Natl. Acad. Sci. U.S.A.">
        <title>Molecular genetic anatomy of inter- and intraserotype variation in the human bacterial pathogen group A Streptococcus.</title>
        <authorList>
            <person name="Beres S.B."/>
            <person name="Richter E.W."/>
            <person name="Nagiec M.J."/>
            <person name="Sumby P."/>
            <person name="Porcella S.F."/>
            <person name="DeLeo F.R."/>
            <person name="Musser J.M."/>
        </authorList>
    </citation>
    <scope>NUCLEOTIDE SEQUENCE [LARGE SCALE GENOMIC DNA]</scope>
    <source>
        <strain>MGAS2096</strain>
    </source>
</reference>
<accession>Q1J982</accession>